<reference key="1">
    <citation type="journal article" date="1999" name="AIDS Res. Hum. Retroviruses">
        <title>Mutations in CCR5-coding sequences are not associated with SIV carrier status in African nonhuman primates.</title>
        <authorList>
            <person name="Mueller-Trutwin M.-C."/>
            <person name="Corbet S."/>
            <person name="Hansen J."/>
            <person name="Georges-Courbot M.-C."/>
            <person name="Diop O."/>
            <person name="Rigoulet J."/>
            <person name="Barre-Sinoussi F."/>
            <person name="Fomsgaard A."/>
        </authorList>
    </citation>
    <scope>NUCLEOTIDE SEQUENCE [GENOMIC DNA]</scope>
</reference>
<evidence type="ECO:0000250" key="1">
    <source>
        <dbReference type="UniProtKB" id="P51681"/>
    </source>
</evidence>
<evidence type="ECO:0000255" key="2"/>
<evidence type="ECO:0000255" key="3">
    <source>
        <dbReference type="PROSITE-ProRule" id="PRU00521"/>
    </source>
</evidence>
<evidence type="ECO:0000305" key="4"/>
<comment type="function">
    <text evidence="1">Receptor for a number of inflammatory CC-chemokines including CCL3/MIP-1-alpha, CCL4/MIP-1-beta and RANTES and subsequently transduces a signal by increasing the intracellular calcium ion level. May play a role in the control of granulocytic lineage proliferation or differentiation. Participates in T-lymphocyte migration to the infection site by acting as a chemotactic receptor.</text>
</comment>
<comment type="subunit">
    <text evidence="1">Interacts with PRAF2. Efficient ligand binding to CCL3/MIP-1alpha and CCL4/MIP-1beta requires sulfation, O-glycosylation and sialic acid modifications. Glycosylation on Ser-6 is required for efficient binding of CCL4. Interacts with GRK2. Interacts with ARRB1 and ARRB2. Interacts with CNIH4. Interacts with S100A4; this interaction stimulates T-lymphocyte chemotaxis.</text>
</comment>
<comment type="subcellular location">
    <subcellularLocation>
        <location>Cell membrane</location>
        <topology>Multi-pass membrane protein</topology>
    </subcellularLocation>
</comment>
<comment type="PTM">
    <text evidence="1">Sulfated on at least 2 of the N-terminal tyrosines. Sulfation is required for efficient binding of the chemokines, CCL3 and CCL4 (By similarity).</text>
</comment>
<comment type="PTM">
    <text evidence="1">Palmitoylation in the C-terminal is important for cell surface expression.</text>
</comment>
<comment type="PTM">
    <text evidence="1">Phosphorylation on serine residues in the C-terminal is stimulated by binding CC chemokines especially by APO-RANTES.</text>
</comment>
<comment type="PTM">
    <text evidence="1">O-glycosylated, but not N-glycosylated. Ser-6 appears to be the major site even if Ser-7 may be also O-glycosylated. Also sialylated glycans present which contribute to chemokine binding. Thr-16 and Ser-17 may also be glycosylated and, if so, with small moieties such as a T-antigen.</text>
</comment>
<comment type="similarity">
    <text evidence="3">Belongs to the G-protein coupled receptor 1 family.</text>
</comment>
<protein>
    <recommendedName>
        <fullName>C-C chemokine receptor type 5</fullName>
        <shortName>C-C CKR-5</shortName>
        <shortName>CC-CKR-5</shortName>
        <shortName>CCR-5</shortName>
        <shortName>CCR5</shortName>
    </recommendedName>
    <cdAntigenName>CD195</cdAntigenName>
</protein>
<accession>Q9XT76</accession>
<dbReference type="EMBL" id="AF081579">
    <property type="protein sequence ID" value="AAD45497.1"/>
    <property type="molecule type" value="Genomic_DNA"/>
</dbReference>
<dbReference type="SMR" id="Q9XT76"/>
<dbReference type="GlyCosmos" id="Q9XT76">
    <property type="glycosylation" value="2 sites, No reported glycans"/>
</dbReference>
<dbReference type="GO" id="GO:0005737">
    <property type="term" value="C:cytoplasm"/>
    <property type="evidence" value="ECO:0007669"/>
    <property type="project" value="TreeGrafter"/>
</dbReference>
<dbReference type="GO" id="GO:0009897">
    <property type="term" value="C:external side of plasma membrane"/>
    <property type="evidence" value="ECO:0000250"/>
    <property type="project" value="UniProtKB"/>
</dbReference>
<dbReference type="GO" id="GO:0016493">
    <property type="term" value="F:C-C chemokine receptor activity"/>
    <property type="evidence" value="ECO:0000250"/>
    <property type="project" value="UniProtKB"/>
</dbReference>
<dbReference type="GO" id="GO:0071791">
    <property type="term" value="F:chemokine (C-C motif) ligand 5 binding"/>
    <property type="evidence" value="ECO:0007669"/>
    <property type="project" value="TreeGrafter"/>
</dbReference>
<dbReference type="GO" id="GO:0019722">
    <property type="term" value="P:calcium-mediated signaling"/>
    <property type="evidence" value="ECO:0007669"/>
    <property type="project" value="TreeGrafter"/>
</dbReference>
<dbReference type="GO" id="GO:0060326">
    <property type="term" value="P:cell chemotaxis"/>
    <property type="evidence" value="ECO:0007669"/>
    <property type="project" value="TreeGrafter"/>
</dbReference>
<dbReference type="GO" id="GO:0006955">
    <property type="term" value="P:immune response"/>
    <property type="evidence" value="ECO:0007669"/>
    <property type="project" value="InterPro"/>
</dbReference>
<dbReference type="GO" id="GO:0006954">
    <property type="term" value="P:inflammatory response"/>
    <property type="evidence" value="ECO:0007669"/>
    <property type="project" value="InterPro"/>
</dbReference>
<dbReference type="GO" id="GO:0007204">
    <property type="term" value="P:positive regulation of cytosolic calcium ion concentration"/>
    <property type="evidence" value="ECO:0007669"/>
    <property type="project" value="TreeGrafter"/>
</dbReference>
<dbReference type="CDD" id="cd15184">
    <property type="entry name" value="7tmA_CCR5_CCR2"/>
    <property type="match status" value="1"/>
</dbReference>
<dbReference type="FunFam" id="1.20.1070.10:FF:000026">
    <property type="entry name" value="C-C chemokine receptor type 5"/>
    <property type="match status" value="1"/>
</dbReference>
<dbReference type="Gene3D" id="1.20.1070.10">
    <property type="entry name" value="Rhodopsin 7-helix transmembrane proteins"/>
    <property type="match status" value="1"/>
</dbReference>
<dbReference type="InterPro" id="IPR050119">
    <property type="entry name" value="CCR1-9-like"/>
</dbReference>
<dbReference type="InterPro" id="IPR002240">
    <property type="entry name" value="Chemokine_CCR5"/>
</dbReference>
<dbReference type="InterPro" id="IPR000355">
    <property type="entry name" value="Chemokine_rcpt"/>
</dbReference>
<dbReference type="InterPro" id="IPR000276">
    <property type="entry name" value="GPCR_Rhodpsn"/>
</dbReference>
<dbReference type="InterPro" id="IPR017452">
    <property type="entry name" value="GPCR_Rhodpsn_7TM"/>
</dbReference>
<dbReference type="PANTHER" id="PTHR10489:SF686">
    <property type="entry name" value="C-C CHEMOKINE RECEPTOR TYPE 5"/>
    <property type="match status" value="1"/>
</dbReference>
<dbReference type="PANTHER" id="PTHR10489">
    <property type="entry name" value="CELL ADHESION MOLECULE"/>
    <property type="match status" value="1"/>
</dbReference>
<dbReference type="Pfam" id="PF00001">
    <property type="entry name" value="7tm_1"/>
    <property type="match status" value="1"/>
</dbReference>
<dbReference type="PRINTS" id="PR00657">
    <property type="entry name" value="CCCHEMOKINER"/>
</dbReference>
<dbReference type="PRINTS" id="PR01110">
    <property type="entry name" value="CHEMOKINER5"/>
</dbReference>
<dbReference type="PRINTS" id="PR00237">
    <property type="entry name" value="GPCRRHODOPSN"/>
</dbReference>
<dbReference type="SUPFAM" id="SSF81321">
    <property type="entry name" value="Family A G protein-coupled receptor-like"/>
    <property type="match status" value="1"/>
</dbReference>
<dbReference type="PROSITE" id="PS00237">
    <property type="entry name" value="G_PROTEIN_RECEP_F1_1"/>
    <property type="match status" value="1"/>
</dbReference>
<dbReference type="PROSITE" id="PS50262">
    <property type="entry name" value="G_PROTEIN_RECEP_F1_2"/>
    <property type="match status" value="1"/>
</dbReference>
<gene>
    <name type="primary">CCR5</name>
    <name type="synonym">CMKBR5</name>
</gene>
<keyword id="KW-1003">Cell membrane</keyword>
<keyword id="KW-1015">Disulfide bond</keyword>
<keyword id="KW-0297">G-protein coupled receptor</keyword>
<keyword id="KW-0325">Glycoprotein</keyword>
<keyword id="KW-0449">Lipoprotein</keyword>
<keyword id="KW-0472">Membrane</keyword>
<keyword id="KW-0564">Palmitate</keyword>
<keyword id="KW-0597">Phosphoprotein</keyword>
<keyword id="KW-0675">Receptor</keyword>
<keyword id="KW-0765">Sulfation</keyword>
<keyword id="KW-0807">Transducer</keyword>
<keyword id="KW-0812">Transmembrane</keyword>
<keyword id="KW-1133">Transmembrane helix</keyword>
<sequence length="352" mass="40409">MDYQVSSPTYDIDYYTSEPCQKINVKQIAARLLPPLYSLVFIFGFVGNILVVLILINCKRLKSMTDIYLLNLAISDLLFLLTIPFWAHYAAAQWDFGNTMCQLLTGLYLIGFFSGIFFIILLTIDRYLAIVHAVFALKARTVTFGLVTSVITWVVAVFASLPGIIFTRSQREGLHYTCSSHFPSSQYQFWKNFQTLKIVILGLVLPLLVMVICYSGILKTLLRCRNEKKRHRAVRLIFTIMIVYFLFWAPYNIVLLLNTFQEFFGLNNCSSSNRLDQAMQVTETLGMTHCCINPIIYAFVGEKFRNYLLVFFQKHLAKRFCKCCSIFQQEAPERASSVYTRSTGEQETTVGL</sequence>
<name>CCR5_ALLLH</name>
<feature type="chain" id="PRO_0000256649" description="C-C chemokine receptor type 5">
    <location>
        <begin position="1"/>
        <end position="352"/>
    </location>
</feature>
<feature type="topological domain" description="Extracellular" evidence="2">
    <location>
        <begin position="1"/>
        <end position="30"/>
    </location>
</feature>
<feature type="transmembrane region" description="Helical; Name=1" evidence="2">
    <location>
        <begin position="31"/>
        <end position="58"/>
    </location>
</feature>
<feature type="topological domain" description="Cytoplasmic" evidence="2">
    <location>
        <begin position="59"/>
        <end position="68"/>
    </location>
</feature>
<feature type="transmembrane region" description="Helical; Name=2" evidence="2">
    <location>
        <begin position="69"/>
        <end position="89"/>
    </location>
</feature>
<feature type="topological domain" description="Extracellular" evidence="2">
    <location>
        <begin position="90"/>
        <end position="102"/>
    </location>
</feature>
<feature type="transmembrane region" description="Helical; Name=3" evidence="2">
    <location>
        <begin position="103"/>
        <end position="124"/>
    </location>
</feature>
<feature type="topological domain" description="Cytoplasmic" evidence="2">
    <location>
        <begin position="125"/>
        <end position="141"/>
    </location>
</feature>
<feature type="transmembrane region" description="Helical; Name=4" evidence="2">
    <location>
        <begin position="142"/>
        <end position="166"/>
    </location>
</feature>
<feature type="topological domain" description="Extracellular" evidence="2">
    <location>
        <begin position="167"/>
        <end position="198"/>
    </location>
</feature>
<feature type="transmembrane region" description="Helical; Name=5" evidence="2">
    <location>
        <begin position="199"/>
        <end position="218"/>
    </location>
</feature>
<feature type="topological domain" description="Cytoplasmic" evidence="2">
    <location>
        <begin position="219"/>
        <end position="235"/>
    </location>
</feature>
<feature type="transmembrane region" description="Helical; Name=6" evidence="2">
    <location>
        <begin position="236"/>
        <end position="260"/>
    </location>
</feature>
<feature type="topological domain" description="Extracellular" evidence="2">
    <location>
        <begin position="261"/>
        <end position="277"/>
    </location>
</feature>
<feature type="transmembrane region" description="Helical; Name=7" evidence="2">
    <location>
        <begin position="278"/>
        <end position="301"/>
    </location>
</feature>
<feature type="topological domain" description="Cytoplasmic" evidence="2">
    <location>
        <begin position="302"/>
        <end position="352"/>
    </location>
</feature>
<feature type="modified residue" description="Sulfotyrosine" evidence="1">
    <location>
        <position position="3"/>
    </location>
</feature>
<feature type="modified residue" description="Sulfotyrosine" evidence="2">
    <location>
        <position position="10"/>
    </location>
</feature>
<feature type="modified residue" description="Sulfotyrosine" evidence="2">
    <location>
        <position position="14"/>
    </location>
</feature>
<feature type="modified residue" description="Sulfotyrosine" evidence="2">
    <location>
        <position position="15"/>
    </location>
</feature>
<feature type="modified residue" description="Phosphoserine; by BARK1" evidence="1">
    <location>
        <position position="336"/>
    </location>
</feature>
<feature type="modified residue" description="Phosphoserine; by BARK1" evidence="1">
    <location>
        <position position="337"/>
    </location>
</feature>
<feature type="modified residue" description="Phosphoserine; by BARK1" evidence="1">
    <location>
        <position position="342"/>
    </location>
</feature>
<feature type="lipid moiety-binding region" description="S-palmitoyl cysteine" evidence="1">
    <location>
        <position position="321"/>
    </location>
</feature>
<feature type="lipid moiety-binding region" description="S-palmitoyl cysteine" evidence="1">
    <location>
        <position position="323"/>
    </location>
</feature>
<feature type="lipid moiety-binding region" description="S-palmitoyl cysteine" evidence="1">
    <location>
        <position position="324"/>
    </location>
</feature>
<feature type="glycosylation site" description="O-linked (GalNAc...) serine" evidence="1">
    <location>
        <position position="6"/>
    </location>
</feature>
<feature type="glycosylation site" description="O-linked (GalNAc...) serine" evidence="4">
    <location>
        <position position="7"/>
    </location>
</feature>
<feature type="disulfide bond" evidence="1">
    <location>
        <begin position="20"/>
        <end position="269"/>
    </location>
</feature>
<feature type="disulfide bond" evidence="3">
    <location>
        <begin position="101"/>
        <end position="178"/>
    </location>
</feature>
<proteinExistence type="inferred from homology"/>
<organism>
    <name type="scientific">Allochrocebus lhoesti</name>
    <name type="common">L'Hoest's monkey</name>
    <name type="synonym">Cercopithecus lhoesti</name>
    <dbReference type="NCBI Taxonomy" id="100224"/>
    <lineage>
        <taxon>Eukaryota</taxon>
        <taxon>Metazoa</taxon>
        <taxon>Chordata</taxon>
        <taxon>Craniata</taxon>
        <taxon>Vertebrata</taxon>
        <taxon>Euteleostomi</taxon>
        <taxon>Mammalia</taxon>
        <taxon>Eutheria</taxon>
        <taxon>Euarchontoglires</taxon>
        <taxon>Primates</taxon>
        <taxon>Haplorrhini</taxon>
        <taxon>Catarrhini</taxon>
        <taxon>Cercopithecidae</taxon>
        <taxon>Cercopithecinae</taxon>
        <taxon>Allochrocebus</taxon>
    </lineage>
</organism>